<sequence>MLCDRLWRNARLATLAEGAPGLGLVEDGLIAARDGRILYAGPARAAPAFAARETVDCEGRWITPGLIDCHTHLVHGGDRAAEFEARLAGASYEEIARAGGGIVSTVRATRAASEDALVGSALRRLDALIAEGVTAVEVKSGYGLSVASERASLRAARRLGESRDVTVTTTFLGAHALPPEEPDKDRYIAHVCTEMLPALAREGLADAVDAFCEGIAFSPAQTARVFEAARAAGLPVKLHADQLSDLGGAALAARFGALSADHLEYADEAGAAALARAGTVAVLLPGAFYFIRETRRPPVDLFRRHGTRMALATDCNPGTSPLTSLLLVLNMGATLFRLTVEECLAGVTREAARALGRLHEIGTLEAGKWCDLAVWDVERPAELVYRMGFNPLHARIRRGR</sequence>
<dbReference type="EC" id="3.5.2.7" evidence="1"/>
<dbReference type="EMBL" id="CP000943">
    <property type="protein sequence ID" value="ACA16147.1"/>
    <property type="molecule type" value="Genomic_DNA"/>
</dbReference>
<dbReference type="RefSeq" id="WP_012331558.1">
    <property type="nucleotide sequence ID" value="NC_010511.1"/>
</dbReference>
<dbReference type="SMR" id="B0UQ16"/>
<dbReference type="STRING" id="426117.M446_1654"/>
<dbReference type="KEGG" id="met:M446_1654"/>
<dbReference type="eggNOG" id="COG1228">
    <property type="taxonomic scope" value="Bacteria"/>
</dbReference>
<dbReference type="HOGENOM" id="CLU_041647_0_0_5"/>
<dbReference type="UniPathway" id="UPA00379">
    <property type="reaction ID" value="UER00551"/>
</dbReference>
<dbReference type="GO" id="GO:0005737">
    <property type="term" value="C:cytoplasm"/>
    <property type="evidence" value="ECO:0007669"/>
    <property type="project" value="UniProtKB-SubCell"/>
</dbReference>
<dbReference type="GO" id="GO:0050480">
    <property type="term" value="F:imidazolonepropionase activity"/>
    <property type="evidence" value="ECO:0007669"/>
    <property type="project" value="UniProtKB-UniRule"/>
</dbReference>
<dbReference type="GO" id="GO:0005506">
    <property type="term" value="F:iron ion binding"/>
    <property type="evidence" value="ECO:0007669"/>
    <property type="project" value="UniProtKB-UniRule"/>
</dbReference>
<dbReference type="GO" id="GO:0008270">
    <property type="term" value="F:zinc ion binding"/>
    <property type="evidence" value="ECO:0007669"/>
    <property type="project" value="UniProtKB-UniRule"/>
</dbReference>
<dbReference type="GO" id="GO:0019556">
    <property type="term" value="P:L-histidine catabolic process to glutamate and formamide"/>
    <property type="evidence" value="ECO:0007669"/>
    <property type="project" value="UniProtKB-UniPathway"/>
</dbReference>
<dbReference type="GO" id="GO:0019557">
    <property type="term" value="P:L-histidine catabolic process to glutamate and formate"/>
    <property type="evidence" value="ECO:0007669"/>
    <property type="project" value="UniProtKB-UniPathway"/>
</dbReference>
<dbReference type="CDD" id="cd01296">
    <property type="entry name" value="Imidazolone-5PH"/>
    <property type="match status" value="1"/>
</dbReference>
<dbReference type="FunFam" id="3.20.20.140:FF:000007">
    <property type="entry name" value="Imidazolonepropionase"/>
    <property type="match status" value="1"/>
</dbReference>
<dbReference type="Gene3D" id="3.20.20.140">
    <property type="entry name" value="Metal-dependent hydrolases"/>
    <property type="match status" value="1"/>
</dbReference>
<dbReference type="Gene3D" id="2.30.40.10">
    <property type="entry name" value="Urease, subunit C, domain 1"/>
    <property type="match status" value="1"/>
</dbReference>
<dbReference type="HAMAP" id="MF_00372">
    <property type="entry name" value="HutI"/>
    <property type="match status" value="1"/>
</dbReference>
<dbReference type="InterPro" id="IPR006680">
    <property type="entry name" value="Amidohydro-rel"/>
</dbReference>
<dbReference type="InterPro" id="IPR005920">
    <property type="entry name" value="HutI"/>
</dbReference>
<dbReference type="InterPro" id="IPR011059">
    <property type="entry name" value="Metal-dep_hydrolase_composite"/>
</dbReference>
<dbReference type="InterPro" id="IPR032466">
    <property type="entry name" value="Metal_Hydrolase"/>
</dbReference>
<dbReference type="NCBIfam" id="TIGR01224">
    <property type="entry name" value="hutI"/>
    <property type="match status" value="1"/>
</dbReference>
<dbReference type="PANTHER" id="PTHR42752">
    <property type="entry name" value="IMIDAZOLONEPROPIONASE"/>
    <property type="match status" value="1"/>
</dbReference>
<dbReference type="PANTHER" id="PTHR42752:SF1">
    <property type="entry name" value="IMIDAZOLONEPROPIONASE-RELATED"/>
    <property type="match status" value="1"/>
</dbReference>
<dbReference type="Pfam" id="PF01979">
    <property type="entry name" value="Amidohydro_1"/>
    <property type="match status" value="1"/>
</dbReference>
<dbReference type="SUPFAM" id="SSF51338">
    <property type="entry name" value="Composite domain of metallo-dependent hydrolases"/>
    <property type="match status" value="1"/>
</dbReference>
<dbReference type="SUPFAM" id="SSF51556">
    <property type="entry name" value="Metallo-dependent hydrolases"/>
    <property type="match status" value="1"/>
</dbReference>
<reference key="1">
    <citation type="submission" date="2008-02" db="EMBL/GenBank/DDBJ databases">
        <title>Complete sequence of chromosome of Methylobacterium sp. 4-46.</title>
        <authorList>
            <consortium name="US DOE Joint Genome Institute"/>
            <person name="Copeland A."/>
            <person name="Lucas S."/>
            <person name="Lapidus A."/>
            <person name="Glavina del Rio T."/>
            <person name="Dalin E."/>
            <person name="Tice H."/>
            <person name="Bruce D."/>
            <person name="Goodwin L."/>
            <person name="Pitluck S."/>
            <person name="Chertkov O."/>
            <person name="Brettin T."/>
            <person name="Detter J.C."/>
            <person name="Han C."/>
            <person name="Kuske C.R."/>
            <person name="Schmutz J."/>
            <person name="Larimer F."/>
            <person name="Land M."/>
            <person name="Hauser L."/>
            <person name="Kyrpides N."/>
            <person name="Ivanova N."/>
            <person name="Marx C.J."/>
            <person name="Richardson P."/>
        </authorList>
    </citation>
    <scope>NUCLEOTIDE SEQUENCE [LARGE SCALE GENOMIC DNA]</scope>
    <source>
        <strain>4-46</strain>
    </source>
</reference>
<gene>
    <name evidence="1" type="primary">hutI</name>
    <name type="ordered locus">M446_1654</name>
</gene>
<comment type="function">
    <text evidence="1">Catalyzes the hydrolytic cleavage of the carbon-nitrogen bond in imidazolone-5-propanoate to yield N-formimidoyl-L-glutamate. It is the third step in the universal histidine degradation pathway.</text>
</comment>
<comment type="catalytic activity">
    <reaction evidence="1">
        <text>4-imidazolone-5-propanoate + H2O = N-formimidoyl-L-glutamate</text>
        <dbReference type="Rhea" id="RHEA:23660"/>
        <dbReference type="ChEBI" id="CHEBI:15377"/>
        <dbReference type="ChEBI" id="CHEBI:58928"/>
        <dbReference type="ChEBI" id="CHEBI:77893"/>
        <dbReference type="EC" id="3.5.2.7"/>
    </reaction>
</comment>
<comment type="cofactor">
    <cofactor evidence="1">
        <name>Zn(2+)</name>
        <dbReference type="ChEBI" id="CHEBI:29105"/>
    </cofactor>
    <cofactor evidence="1">
        <name>Fe(3+)</name>
        <dbReference type="ChEBI" id="CHEBI:29034"/>
    </cofactor>
    <text evidence="1">Binds 1 zinc or iron ion per subunit.</text>
</comment>
<comment type="pathway">
    <text evidence="1">Amino-acid degradation; L-histidine degradation into L-glutamate; N-formimidoyl-L-glutamate from L-histidine: step 3/3.</text>
</comment>
<comment type="subcellular location">
    <subcellularLocation>
        <location evidence="1">Cytoplasm</location>
    </subcellularLocation>
</comment>
<comment type="similarity">
    <text evidence="1">Belongs to the metallo-dependent hydrolases superfamily. HutI family.</text>
</comment>
<feature type="chain" id="PRO_1000121546" description="Imidazolonepropionase">
    <location>
        <begin position="1"/>
        <end position="400"/>
    </location>
</feature>
<feature type="binding site" evidence="1">
    <location>
        <position position="70"/>
    </location>
    <ligand>
        <name>Fe(3+)</name>
        <dbReference type="ChEBI" id="CHEBI:29034"/>
    </ligand>
</feature>
<feature type="binding site" evidence="1">
    <location>
        <position position="70"/>
    </location>
    <ligand>
        <name>Zn(2+)</name>
        <dbReference type="ChEBI" id="CHEBI:29105"/>
    </ligand>
</feature>
<feature type="binding site" evidence="1">
    <location>
        <position position="72"/>
    </location>
    <ligand>
        <name>Fe(3+)</name>
        <dbReference type="ChEBI" id="CHEBI:29034"/>
    </ligand>
</feature>
<feature type="binding site" evidence="1">
    <location>
        <position position="72"/>
    </location>
    <ligand>
        <name>Zn(2+)</name>
        <dbReference type="ChEBI" id="CHEBI:29105"/>
    </ligand>
</feature>
<feature type="binding site" evidence="1">
    <location>
        <position position="79"/>
    </location>
    <ligand>
        <name>4-imidazolone-5-propanoate</name>
        <dbReference type="ChEBI" id="CHEBI:77893"/>
    </ligand>
</feature>
<feature type="binding site" evidence="1">
    <location>
        <position position="142"/>
    </location>
    <ligand>
        <name>4-imidazolone-5-propanoate</name>
        <dbReference type="ChEBI" id="CHEBI:77893"/>
    </ligand>
</feature>
<feature type="binding site" evidence="1">
    <location>
        <position position="142"/>
    </location>
    <ligand>
        <name>N-formimidoyl-L-glutamate</name>
        <dbReference type="ChEBI" id="CHEBI:58928"/>
    </ligand>
</feature>
<feature type="binding site" evidence="1">
    <location>
        <position position="175"/>
    </location>
    <ligand>
        <name>4-imidazolone-5-propanoate</name>
        <dbReference type="ChEBI" id="CHEBI:77893"/>
    </ligand>
</feature>
<feature type="binding site" evidence="1">
    <location>
        <position position="239"/>
    </location>
    <ligand>
        <name>Fe(3+)</name>
        <dbReference type="ChEBI" id="CHEBI:29034"/>
    </ligand>
</feature>
<feature type="binding site" evidence="1">
    <location>
        <position position="239"/>
    </location>
    <ligand>
        <name>Zn(2+)</name>
        <dbReference type="ChEBI" id="CHEBI:29105"/>
    </ligand>
</feature>
<feature type="binding site" evidence="1">
    <location>
        <position position="242"/>
    </location>
    <ligand>
        <name>4-imidazolone-5-propanoate</name>
        <dbReference type="ChEBI" id="CHEBI:77893"/>
    </ligand>
</feature>
<feature type="binding site" evidence="1">
    <location>
        <position position="314"/>
    </location>
    <ligand>
        <name>Fe(3+)</name>
        <dbReference type="ChEBI" id="CHEBI:29034"/>
    </ligand>
</feature>
<feature type="binding site" evidence="1">
    <location>
        <position position="314"/>
    </location>
    <ligand>
        <name>Zn(2+)</name>
        <dbReference type="ChEBI" id="CHEBI:29105"/>
    </ligand>
</feature>
<feature type="binding site" evidence="1">
    <location>
        <position position="316"/>
    </location>
    <ligand>
        <name>N-formimidoyl-L-glutamate</name>
        <dbReference type="ChEBI" id="CHEBI:58928"/>
    </ligand>
</feature>
<feature type="binding site" evidence="1">
    <location>
        <position position="318"/>
    </location>
    <ligand>
        <name>N-formimidoyl-L-glutamate</name>
        <dbReference type="ChEBI" id="CHEBI:58928"/>
    </ligand>
</feature>
<feature type="binding site" evidence="1">
    <location>
        <position position="319"/>
    </location>
    <ligand>
        <name>4-imidazolone-5-propanoate</name>
        <dbReference type="ChEBI" id="CHEBI:77893"/>
    </ligand>
</feature>
<name>HUTI_METS4</name>
<proteinExistence type="inferred from homology"/>
<evidence type="ECO:0000255" key="1">
    <source>
        <dbReference type="HAMAP-Rule" id="MF_00372"/>
    </source>
</evidence>
<accession>B0UQ16</accession>
<keyword id="KW-0963">Cytoplasm</keyword>
<keyword id="KW-0369">Histidine metabolism</keyword>
<keyword id="KW-0378">Hydrolase</keyword>
<keyword id="KW-0408">Iron</keyword>
<keyword id="KW-0479">Metal-binding</keyword>
<keyword id="KW-0862">Zinc</keyword>
<protein>
    <recommendedName>
        <fullName evidence="1">Imidazolonepropionase</fullName>
        <ecNumber evidence="1">3.5.2.7</ecNumber>
    </recommendedName>
    <alternativeName>
        <fullName evidence="1">Imidazolone-5-propionate hydrolase</fullName>
    </alternativeName>
</protein>
<organism>
    <name type="scientific">Methylobacterium sp. (strain 4-46)</name>
    <dbReference type="NCBI Taxonomy" id="426117"/>
    <lineage>
        <taxon>Bacteria</taxon>
        <taxon>Pseudomonadati</taxon>
        <taxon>Pseudomonadota</taxon>
        <taxon>Alphaproteobacteria</taxon>
        <taxon>Hyphomicrobiales</taxon>
        <taxon>Methylobacteriaceae</taxon>
        <taxon>Methylobacterium</taxon>
    </lineage>
</organism>